<feature type="chain" id="PRO_0000189639" description="Protein FdhE">
    <location>
        <begin position="1"/>
        <end position="309"/>
    </location>
</feature>
<sequence>MSIRIIPQDELGSSEKRTADMIPPLLFPRLKNLYNRRAERLRELAENNPLGDYLRFAALIAHAQEVVLYDHPLEMDLTTRIKEASAQGKPPLDIHVLPRDKHWQKLLMALIAELKPEMSGPALAVIENLEKASTQELEDMASALFASDFSSVSSDKAPFIWAALSLYWAQMANLIPGKARAEYGEQRQYCPVCGSMPVSSMVQIGTTQGLRYLHCNLCETEWHVVRVKCSNCEQSGKLHYWSLDDEQAAIKAESCDDCGTYLKILYQEKEPKVEAVADDLASLVLDARMEQEGYARSSINPFLFPGEGE</sequence>
<name>FDHE_ECOL6</name>
<comment type="function">
    <text evidence="1">Necessary for formate dehydrogenase activity.</text>
</comment>
<comment type="subcellular location">
    <subcellularLocation>
        <location evidence="1">Cytoplasm</location>
    </subcellularLocation>
</comment>
<comment type="similarity">
    <text evidence="1">Belongs to the FdhE family.</text>
</comment>
<evidence type="ECO:0000255" key="1">
    <source>
        <dbReference type="HAMAP-Rule" id="MF_00611"/>
    </source>
</evidence>
<gene>
    <name evidence="1" type="primary">fdhE</name>
    <name type="ordered locus">c4841</name>
</gene>
<protein>
    <recommendedName>
        <fullName evidence="1">Protein FdhE</fullName>
    </recommendedName>
</protein>
<dbReference type="EMBL" id="AE014075">
    <property type="protein sequence ID" value="AAN83270.1"/>
    <property type="molecule type" value="Genomic_DNA"/>
</dbReference>
<dbReference type="RefSeq" id="WP_000027720.1">
    <property type="nucleotide sequence ID" value="NZ_CP051263.1"/>
</dbReference>
<dbReference type="SMR" id="Q8FBE8"/>
<dbReference type="STRING" id="199310.c4841"/>
<dbReference type="KEGG" id="ecc:c4841"/>
<dbReference type="eggNOG" id="COG3058">
    <property type="taxonomic scope" value="Bacteria"/>
</dbReference>
<dbReference type="HOGENOM" id="CLU_055275_0_0_6"/>
<dbReference type="BioCyc" id="ECOL199310:C4841-MONOMER"/>
<dbReference type="Proteomes" id="UP000001410">
    <property type="component" value="Chromosome"/>
</dbReference>
<dbReference type="GO" id="GO:0005829">
    <property type="term" value="C:cytosol"/>
    <property type="evidence" value="ECO:0007669"/>
    <property type="project" value="TreeGrafter"/>
</dbReference>
<dbReference type="GO" id="GO:0008199">
    <property type="term" value="F:ferric iron binding"/>
    <property type="evidence" value="ECO:0007669"/>
    <property type="project" value="TreeGrafter"/>
</dbReference>
<dbReference type="GO" id="GO:0051604">
    <property type="term" value="P:protein maturation"/>
    <property type="evidence" value="ECO:0007669"/>
    <property type="project" value="TreeGrafter"/>
</dbReference>
<dbReference type="CDD" id="cd16341">
    <property type="entry name" value="FdhE"/>
    <property type="match status" value="1"/>
</dbReference>
<dbReference type="FunFam" id="3.90.1670.10:FF:000001">
    <property type="entry name" value="Protein FdhE"/>
    <property type="match status" value="1"/>
</dbReference>
<dbReference type="Gene3D" id="3.90.1670.10">
    <property type="entry name" value="FdhE-like domain"/>
    <property type="match status" value="1"/>
</dbReference>
<dbReference type="HAMAP" id="MF_00611">
    <property type="entry name" value="FdeH"/>
    <property type="match status" value="1"/>
</dbReference>
<dbReference type="InterPro" id="IPR024064">
    <property type="entry name" value="FdhE-like_sf"/>
</dbReference>
<dbReference type="InterPro" id="IPR056796">
    <property type="entry name" value="FdhE_C"/>
</dbReference>
<dbReference type="InterPro" id="IPR056797">
    <property type="entry name" value="FdhE_central"/>
</dbReference>
<dbReference type="InterPro" id="IPR056774">
    <property type="entry name" value="FdhE_N"/>
</dbReference>
<dbReference type="InterPro" id="IPR006452">
    <property type="entry name" value="Formate_DH_accessory"/>
</dbReference>
<dbReference type="NCBIfam" id="TIGR01562">
    <property type="entry name" value="FdhE"/>
    <property type="match status" value="1"/>
</dbReference>
<dbReference type="NCBIfam" id="NF002925">
    <property type="entry name" value="PRK03564.1"/>
    <property type="match status" value="1"/>
</dbReference>
<dbReference type="PANTHER" id="PTHR37689">
    <property type="entry name" value="PROTEIN FDHE"/>
    <property type="match status" value="1"/>
</dbReference>
<dbReference type="PANTHER" id="PTHR37689:SF1">
    <property type="entry name" value="PROTEIN FDHE"/>
    <property type="match status" value="1"/>
</dbReference>
<dbReference type="Pfam" id="PF24860">
    <property type="entry name" value="FdhE_C"/>
    <property type="match status" value="1"/>
</dbReference>
<dbReference type="Pfam" id="PF24859">
    <property type="entry name" value="FdhE_central"/>
    <property type="match status" value="1"/>
</dbReference>
<dbReference type="Pfam" id="PF04216">
    <property type="entry name" value="FdhE_N"/>
    <property type="match status" value="1"/>
</dbReference>
<dbReference type="PIRSF" id="PIRSF018296">
    <property type="entry name" value="Format_dh_formtn"/>
    <property type="match status" value="1"/>
</dbReference>
<dbReference type="SUPFAM" id="SSF144020">
    <property type="entry name" value="FdhE-like"/>
    <property type="match status" value="1"/>
</dbReference>
<accession>Q8FBE8</accession>
<organism>
    <name type="scientific">Escherichia coli O6:H1 (strain CFT073 / ATCC 700928 / UPEC)</name>
    <dbReference type="NCBI Taxonomy" id="199310"/>
    <lineage>
        <taxon>Bacteria</taxon>
        <taxon>Pseudomonadati</taxon>
        <taxon>Pseudomonadota</taxon>
        <taxon>Gammaproteobacteria</taxon>
        <taxon>Enterobacterales</taxon>
        <taxon>Enterobacteriaceae</taxon>
        <taxon>Escherichia</taxon>
    </lineage>
</organism>
<proteinExistence type="inferred from homology"/>
<keyword id="KW-0963">Cytoplasm</keyword>
<keyword id="KW-1185">Reference proteome</keyword>
<reference key="1">
    <citation type="journal article" date="2002" name="Proc. Natl. Acad. Sci. U.S.A.">
        <title>Extensive mosaic structure revealed by the complete genome sequence of uropathogenic Escherichia coli.</title>
        <authorList>
            <person name="Welch R.A."/>
            <person name="Burland V."/>
            <person name="Plunkett G. III"/>
            <person name="Redford P."/>
            <person name="Roesch P."/>
            <person name="Rasko D."/>
            <person name="Buckles E.L."/>
            <person name="Liou S.-R."/>
            <person name="Boutin A."/>
            <person name="Hackett J."/>
            <person name="Stroud D."/>
            <person name="Mayhew G.F."/>
            <person name="Rose D.J."/>
            <person name="Zhou S."/>
            <person name="Schwartz D.C."/>
            <person name="Perna N.T."/>
            <person name="Mobley H.L.T."/>
            <person name="Donnenberg M.S."/>
            <person name="Blattner F.R."/>
        </authorList>
    </citation>
    <scope>NUCLEOTIDE SEQUENCE [LARGE SCALE GENOMIC DNA]</scope>
    <source>
        <strain>CFT073 / ATCC 700928 / UPEC</strain>
    </source>
</reference>